<accession>A4XJI3</accession>
<evidence type="ECO:0000255" key="1">
    <source>
        <dbReference type="HAMAP-Rule" id="MF_01281"/>
    </source>
</evidence>
<keyword id="KW-0378">Hydrolase</keyword>
<keyword id="KW-0479">Metal-binding</keyword>
<keyword id="KW-0862">Zinc</keyword>
<sequence length="429" mass="47854">MDLLIKGATIITLDGENEVLKGDILIENGKISEISQSIELSKEKMFATKVINAENLIALPGFINAHTHCGQTILRSYADDLPLYEWLFEKIFPAEEKLTKEIVYYSSLLGIAEMLKCGTTMFFDMYFHEDMTAKAALETGIKAVLSRGLQTDERQQQRLDETKELIYNYSSDKIKVFFGPHSVYTCSYELLEKVAELSEEFNTGIMIHLSESEDEVNQCYEKYDMSPVKLCQKAGLFTRPCIAAHCVYVDDEDIEILAENGVTAVYNPTSNLKLGNGFAPVFNLIKSGVNVAIGTDSAASNNNLNILEEIHIAALLEKGMYRLPEILKAQEVLKMATVNAAMAADIHNTGRLKKGFSADIVLIKANDLNMLPCYNTISNIVYSSNPSNVYATIVDGEILYMDGRLLTIDEEALIKEIKSIEKILEESIE</sequence>
<name>MTAD_CALS8</name>
<proteinExistence type="inferred from homology"/>
<dbReference type="EC" id="3.5.4.28" evidence="1"/>
<dbReference type="EC" id="3.5.4.31" evidence="1"/>
<dbReference type="EMBL" id="CP000679">
    <property type="protein sequence ID" value="ABP67068.1"/>
    <property type="molecule type" value="Genomic_DNA"/>
</dbReference>
<dbReference type="RefSeq" id="WP_011917004.1">
    <property type="nucleotide sequence ID" value="NC_009437.1"/>
</dbReference>
<dbReference type="SMR" id="A4XJI3"/>
<dbReference type="STRING" id="351627.Csac_1468"/>
<dbReference type="KEGG" id="csc:Csac_1468"/>
<dbReference type="eggNOG" id="COG0402">
    <property type="taxonomic scope" value="Bacteria"/>
</dbReference>
<dbReference type="HOGENOM" id="CLU_012358_2_1_9"/>
<dbReference type="OrthoDB" id="9807210at2"/>
<dbReference type="Proteomes" id="UP000000256">
    <property type="component" value="Chromosome"/>
</dbReference>
<dbReference type="GO" id="GO:0090614">
    <property type="term" value="F:5'-methylthioadenosine deaminase activity"/>
    <property type="evidence" value="ECO:0007669"/>
    <property type="project" value="UniProtKB-UniRule"/>
</dbReference>
<dbReference type="GO" id="GO:0046872">
    <property type="term" value="F:metal ion binding"/>
    <property type="evidence" value="ECO:0007669"/>
    <property type="project" value="UniProtKB-KW"/>
</dbReference>
<dbReference type="GO" id="GO:0050270">
    <property type="term" value="F:S-adenosylhomocysteine deaminase activity"/>
    <property type="evidence" value="ECO:0007669"/>
    <property type="project" value="UniProtKB-UniRule"/>
</dbReference>
<dbReference type="CDD" id="cd01298">
    <property type="entry name" value="ATZ_TRZ_like"/>
    <property type="match status" value="1"/>
</dbReference>
<dbReference type="FunFam" id="3.20.20.140:FF:000014">
    <property type="entry name" value="5-methylthioadenosine/S-adenosylhomocysteine deaminase"/>
    <property type="match status" value="1"/>
</dbReference>
<dbReference type="Gene3D" id="3.20.20.140">
    <property type="entry name" value="Metal-dependent hydrolases"/>
    <property type="match status" value="1"/>
</dbReference>
<dbReference type="Gene3D" id="2.30.40.10">
    <property type="entry name" value="Urease, subunit C, domain 1"/>
    <property type="match status" value="1"/>
</dbReference>
<dbReference type="HAMAP" id="MF_01281">
    <property type="entry name" value="MTA_SAH_deamin"/>
    <property type="match status" value="1"/>
</dbReference>
<dbReference type="InterPro" id="IPR006680">
    <property type="entry name" value="Amidohydro-rel"/>
</dbReference>
<dbReference type="InterPro" id="IPR023512">
    <property type="entry name" value="Deaminase_MtaD/DadD"/>
</dbReference>
<dbReference type="InterPro" id="IPR011059">
    <property type="entry name" value="Metal-dep_hydrolase_composite"/>
</dbReference>
<dbReference type="InterPro" id="IPR032466">
    <property type="entry name" value="Metal_Hydrolase"/>
</dbReference>
<dbReference type="InterPro" id="IPR050287">
    <property type="entry name" value="MTA/SAH_deaminase"/>
</dbReference>
<dbReference type="PANTHER" id="PTHR43794:SF11">
    <property type="entry name" value="AMIDOHYDROLASE-RELATED DOMAIN-CONTAINING PROTEIN"/>
    <property type="match status" value="1"/>
</dbReference>
<dbReference type="PANTHER" id="PTHR43794">
    <property type="entry name" value="AMINOHYDROLASE SSNA-RELATED"/>
    <property type="match status" value="1"/>
</dbReference>
<dbReference type="Pfam" id="PF01979">
    <property type="entry name" value="Amidohydro_1"/>
    <property type="match status" value="1"/>
</dbReference>
<dbReference type="SUPFAM" id="SSF51338">
    <property type="entry name" value="Composite domain of metallo-dependent hydrolases"/>
    <property type="match status" value="1"/>
</dbReference>
<dbReference type="SUPFAM" id="SSF51556">
    <property type="entry name" value="Metallo-dependent hydrolases"/>
    <property type="match status" value="1"/>
</dbReference>
<feature type="chain" id="PRO_0000312449" description="5-methylthioadenosine/S-adenosylhomocysteine deaminase">
    <location>
        <begin position="1"/>
        <end position="429"/>
    </location>
</feature>
<feature type="binding site" evidence="1">
    <location>
        <position position="66"/>
    </location>
    <ligand>
        <name>Zn(2+)</name>
        <dbReference type="ChEBI" id="CHEBI:29105"/>
    </ligand>
</feature>
<feature type="binding site" evidence="1">
    <location>
        <position position="68"/>
    </location>
    <ligand>
        <name>Zn(2+)</name>
        <dbReference type="ChEBI" id="CHEBI:29105"/>
    </ligand>
</feature>
<feature type="binding site" evidence="1">
    <location>
        <position position="95"/>
    </location>
    <ligand>
        <name>substrate</name>
    </ligand>
</feature>
<feature type="binding site" evidence="1">
    <location>
        <position position="147"/>
    </location>
    <ligand>
        <name>substrate</name>
    </ligand>
</feature>
<feature type="binding site" evidence="1">
    <location>
        <position position="158"/>
    </location>
    <ligand>
        <name>substrate</name>
    </ligand>
</feature>
<feature type="binding site" evidence="1">
    <location>
        <position position="181"/>
    </location>
    <ligand>
        <name>substrate</name>
    </ligand>
</feature>
<feature type="binding site" evidence="1">
    <location>
        <position position="208"/>
    </location>
    <ligand>
        <name>Zn(2+)</name>
        <dbReference type="ChEBI" id="CHEBI:29105"/>
    </ligand>
</feature>
<feature type="binding site" evidence="1">
    <location>
        <position position="211"/>
    </location>
    <ligand>
        <name>substrate</name>
    </ligand>
</feature>
<feature type="binding site" evidence="1">
    <location>
        <position position="296"/>
    </location>
    <ligand>
        <name>substrate</name>
    </ligand>
</feature>
<feature type="binding site" evidence="1">
    <location>
        <position position="296"/>
    </location>
    <ligand>
        <name>Zn(2+)</name>
        <dbReference type="ChEBI" id="CHEBI:29105"/>
    </ligand>
</feature>
<gene>
    <name evidence="1" type="primary">mtaD</name>
    <name type="ordered locus">Csac_1468</name>
</gene>
<comment type="function">
    <text evidence="1">Catalyzes the deamination of 5-methylthioadenosine and S-adenosyl-L-homocysteine into 5-methylthioinosine and S-inosyl-L-homocysteine, respectively. Is also able to deaminate adenosine.</text>
</comment>
<comment type="catalytic activity">
    <reaction evidence="1">
        <text>S-adenosyl-L-homocysteine + H2O + H(+) = S-inosyl-L-homocysteine + NH4(+)</text>
        <dbReference type="Rhea" id="RHEA:20716"/>
        <dbReference type="ChEBI" id="CHEBI:15377"/>
        <dbReference type="ChEBI" id="CHEBI:15378"/>
        <dbReference type="ChEBI" id="CHEBI:28938"/>
        <dbReference type="ChEBI" id="CHEBI:57856"/>
        <dbReference type="ChEBI" id="CHEBI:57985"/>
        <dbReference type="EC" id="3.5.4.28"/>
    </reaction>
</comment>
<comment type="catalytic activity">
    <reaction evidence="1">
        <text>S-methyl-5'-thioadenosine + H2O + H(+) = S-methyl-5'-thioinosine + NH4(+)</text>
        <dbReference type="Rhea" id="RHEA:25025"/>
        <dbReference type="ChEBI" id="CHEBI:15377"/>
        <dbReference type="ChEBI" id="CHEBI:15378"/>
        <dbReference type="ChEBI" id="CHEBI:17509"/>
        <dbReference type="ChEBI" id="CHEBI:28938"/>
        <dbReference type="ChEBI" id="CHEBI:48595"/>
        <dbReference type="EC" id="3.5.4.31"/>
    </reaction>
</comment>
<comment type="cofactor">
    <cofactor evidence="1">
        <name>Zn(2+)</name>
        <dbReference type="ChEBI" id="CHEBI:29105"/>
    </cofactor>
    <text evidence="1">Binds 1 zinc ion per subunit.</text>
</comment>
<comment type="similarity">
    <text evidence="1">Belongs to the metallo-dependent hydrolases superfamily. MTA/SAH deaminase family.</text>
</comment>
<organism>
    <name type="scientific">Caldicellulosiruptor saccharolyticus (strain ATCC 43494 / DSM 8903 / Tp8T 6331)</name>
    <dbReference type="NCBI Taxonomy" id="351627"/>
    <lineage>
        <taxon>Bacteria</taxon>
        <taxon>Bacillati</taxon>
        <taxon>Bacillota</taxon>
        <taxon>Bacillota incertae sedis</taxon>
        <taxon>Caldicellulosiruptorales</taxon>
        <taxon>Caldicellulosiruptoraceae</taxon>
        <taxon>Caldicellulosiruptor</taxon>
    </lineage>
</organism>
<protein>
    <recommendedName>
        <fullName evidence="1">5-methylthioadenosine/S-adenosylhomocysteine deaminase</fullName>
        <shortName evidence="1">MTA/SAH deaminase</shortName>
        <ecNumber evidence="1">3.5.4.28</ecNumber>
        <ecNumber evidence="1">3.5.4.31</ecNumber>
    </recommendedName>
</protein>
<reference key="1">
    <citation type="submission" date="2007-04" db="EMBL/GenBank/DDBJ databases">
        <title>Genome sequence of the thermophilic hydrogen-producing bacterium Caldicellulosiruptor saccharolyticus DSM 8903.</title>
        <authorList>
            <person name="Copeland A."/>
            <person name="Lucas S."/>
            <person name="Lapidus A."/>
            <person name="Barry K."/>
            <person name="Detter J.C."/>
            <person name="Glavina del Rio T."/>
            <person name="Hammon N."/>
            <person name="Israni S."/>
            <person name="Dalin E."/>
            <person name="Tice H."/>
            <person name="Pitluck S."/>
            <person name="Kiss H."/>
            <person name="Brettin T."/>
            <person name="Bruce D."/>
            <person name="Han C."/>
            <person name="Schmutz J."/>
            <person name="Larimer F."/>
            <person name="Land M."/>
            <person name="Hauser L."/>
            <person name="Kyrpides N."/>
            <person name="Lykidis A."/>
            <person name="van de Werken H.J.G."/>
            <person name="Verhaart M.R.A."/>
            <person name="VanFossen A.L."/>
            <person name="Lewis D.L."/>
            <person name="Nichols J.D."/>
            <person name="Goorissen H.P."/>
            <person name="van Niel E.W.J."/>
            <person name="Stams F.J.M."/>
            <person name="Willquist K.U."/>
            <person name="Ward D.E."/>
            <person name="van der Oost J."/>
            <person name="Kelly R.M."/>
            <person name="Kengen S.M.W."/>
            <person name="Richardson P."/>
        </authorList>
    </citation>
    <scope>NUCLEOTIDE SEQUENCE [LARGE SCALE GENOMIC DNA]</scope>
    <source>
        <strain>ATCC 43494 / DSM 8903 / Tp8T 6331</strain>
    </source>
</reference>